<gene>
    <name type="primary">Arpin</name>
</gene>
<accession>Q9D0A3</accession>
<accession>Q3U1F3</accession>
<accession>Q8CA84</accession>
<protein>
    <recommendedName>
        <fullName>Arpin</fullName>
    </recommendedName>
    <alternativeName>
        <fullName>Arp2/3 inhibition protein</fullName>
    </alternativeName>
</protein>
<feature type="chain" id="PRO_0000244266" description="Arpin">
    <location>
        <begin position="1"/>
        <end position="226"/>
    </location>
</feature>
<feature type="region of interest" description="Disordered" evidence="2">
    <location>
        <begin position="202"/>
        <end position="226"/>
    </location>
</feature>
<feature type="region of interest" description="Necessary and sufficient fopr interaction with ARPC2" evidence="1">
    <location>
        <begin position="211"/>
        <end position="226"/>
    </location>
</feature>
<feature type="compositionally biased region" description="Basic and acidic residues" evidence="2">
    <location>
        <begin position="204"/>
        <end position="216"/>
    </location>
</feature>
<feature type="compositionally biased region" description="Acidic residues" evidence="2">
    <location>
        <begin position="217"/>
        <end position="226"/>
    </location>
</feature>
<feature type="sequence conflict" description="In Ref. 1; BAE33545." evidence="4" ref="1">
    <original>I</original>
    <variation>V</variation>
    <location>
        <position position="49"/>
    </location>
</feature>
<feature type="sequence conflict" description="In Ref. 1; BAC30326." evidence="4" ref="1">
    <original>F</original>
    <variation>L</variation>
    <location>
        <position position="85"/>
    </location>
</feature>
<name>ARPIN_MOUSE</name>
<proteinExistence type="evidence at protein level"/>
<keyword id="KW-0966">Cell projection</keyword>
<keyword id="KW-1185">Reference proteome</keyword>
<reference key="1">
    <citation type="journal article" date="2005" name="Science">
        <title>The transcriptional landscape of the mammalian genome.</title>
        <authorList>
            <person name="Carninci P."/>
            <person name="Kasukawa T."/>
            <person name="Katayama S."/>
            <person name="Gough J."/>
            <person name="Frith M.C."/>
            <person name="Maeda N."/>
            <person name="Oyama R."/>
            <person name="Ravasi T."/>
            <person name="Lenhard B."/>
            <person name="Wells C."/>
            <person name="Kodzius R."/>
            <person name="Shimokawa K."/>
            <person name="Bajic V.B."/>
            <person name="Brenner S.E."/>
            <person name="Batalov S."/>
            <person name="Forrest A.R."/>
            <person name="Zavolan M."/>
            <person name="Davis M.J."/>
            <person name="Wilming L.G."/>
            <person name="Aidinis V."/>
            <person name="Allen J.E."/>
            <person name="Ambesi-Impiombato A."/>
            <person name="Apweiler R."/>
            <person name="Aturaliya R.N."/>
            <person name="Bailey T.L."/>
            <person name="Bansal M."/>
            <person name="Baxter L."/>
            <person name="Beisel K.W."/>
            <person name="Bersano T."/>
            <person name="Bono H."/>
            <person name="Chalk A.M."/>
            <person name="Chiu K.P."/>
            <person name="Choudhary V."/>
            <person name="Christoffels A."/>
            <person name="Clutterbuck D.R."/>
            <person name="Crowe M.L."/>
            <person name="Dalla E."/>
            <person name="Dalrymple B.P."/>
            <person name="de Bono B."/>
            <person name="Della Gatta G."/>
            <person name="di Bernardo D."/>
            <person name="Down T."/>
            <person name="Engstrom P."/>
            <person name="Fagiolini M."/>
            <person name="Faulkner G."/>
            <person name="Fletcher C.F."/>
            <person name="Fukushima T."/>
            <person name="Furuno M."/>
            <person name="Futaki S."/>
            <person name="Gariboldi M."/>
            <person name="Georgii-Hemming P."/>
            <person name="Gingeras T.R."/>
            <person name="Gojobori T."/>
            <person name="Green R.E."/>
            <person name="Gustincich S."/>
            <person name="Harbers M."/>
            <person name="Hayashi Y."/>
            <person name="Hensch T.K."/>
            <person name="Hirokawa N."/>
            <person name="Hill D."/>
            <person name="Huminiecki L."/>
            <person name="Iacono M."/>
            <person name="Ikeo K."/>
            <person name="Iwama A."/>
            <person name="Ishikawa T."/>
            <person name="Jakt M."/>
            <person name="Kanapin A."/>
            <person name="Katoh M."/>
            <person name="Kawasawa Y."/>
            <person name="Kelso J."/>
            <person name="Kitamura H."/>
            <person name="Kitano H."/>
            <person name="Kollias G."/>
            <person name="Krishnan S.P."/>
            <person name="Kruger A."/>
            <person name="Kummerfeld S.K."/>
            <person name="Kurochkin I.V."/>
            <person name="Lareau L.F."/>
            <person name="Lazarevic D."/>
            <person name="Lipovich L."/>
            <person name="Liu J."/>
            <person name="Liuni S."/>
            <person name="McWilliam S."/>
            <person name="Madan Babu M."/>
            <person name="Madera M."/>
            <person name="Marchionni L."/>
            <person name="Matsuda H."/>
            <person name="Matsuzawa S."/>
            <person name="Miki H."/>
            <person name="Mignone F."/>
            <person name="Miyake S."/>
            <person name="Morris K."/>
            <person name="Mottagui-Tabar S."/>
            <person name="Mulder N."/>
            <person name="Nakano N."/>
            <person name="Nakauchi H."/>
            <person name="Ng P."/>
            <person name="Nilsson R."/>
            <person name="Nishiguchi S."/>
            <person name="Nishikawa S."/>
            <person name="Nori F."/>
            <person name="Ohara O."/>
            <person name="Okazaki Y."/>
            <person name="Orlando V."/>
            <person name="Pang K.C."/>
            <person name="Pavan W.J."/>
            <person name="Pavesi G."/>
            <person name="Pesole G."/>
            <person name="Petrovsky N."/>
            <person name="Piazza S."/>
            <person name="Reed J."/>
            <person name="Reid J.F."/>
            <person name="Ring B.Z."/>
            <person name="Ringwald M."/>
            <person name="Rost B."/>
            <person name="Ruan Y."/>
            <person name="Salzberg S.L."/>
            <person name="Sandelin A."/>
            <person name="Schneider C."/>
            <person name="Schoenbach C."/>
            <person name="Sekiguchi K."/>
            <person name="Semple C.A."/>
            <person name="Seno S."/>
            <person name="Sessa L."/>
            <person name="Sheng Y."/>
            <person name="Shibata Y."/>
            <person name="Shimada H."/>
            <person name="Shimada K."/>
            <person name="Silva D."/>
            <person name="Sinclair B."/>
            <person name="Sperling S."/>
            <person name="Stupka E."/>
            <person name="Sugiura K."/>
            <person name="Sultana R."/>
            <person name="Takenaka Y."/>
            <person name="Taki K."/>
            <person name="Tammoja K."/>
            <person name="Tan S.L."/>
            <person name="Tang S."/>
            <person name="Taylor M.S."/>
            <person name="Tegner J."/>
            <person name="Teichmann S.A."/>
            <person name="Ueda H.R."/>
            <person name="van Nimwegen E."/>
            <person name="Verardo R."/>
            <person name="Wei C.L."/>
            <person name="Yagi K."/>
            <person name="Yamanishi H."/>
            <person name="Zabarovsky E."/>
            <person name="Zhu S."/>
            <person name="Zimmer A."/>
            <person name="Hide W."/>
            <person name="Bult C."/>
            <person name="Grimmond S.M."/>
            <person name="Teasdale R.D."/>
            <person name="Liu E.T."/>
            <person name="Brusic V."/>
            <person name="Quackenbush J."/>
            <person name="Wahlestedt C."/>
            <person name="Mattick J.S."/>
            <person name="Hume D.A."/>
            <person name="Kai C."/>
            <person name="Sasaki D."/>
            <person name="Tomaru Y."/>
            <person name="Fukuda S."/>
            <person name="Kanamori-Katayama M."/>
            <person name="Suzuki M."/>
            <person name="Aoki J."/>
            <person name="Arakawa T."/>
            <person name="Iida J."/>
            <person name="Imamura K."/>
            <person name="Itoh M."/>
            <person name="Kato T."/>
            <person name="Kawaji H."/>
            <person name="Kawagashira N."/>
            <person name="Kawashima T."/>
            <person name="Kojima M."/>
            <person name="Kondo S."/>
            <person name="Konno H."/>
            <person name="Nakano K."/>
            <person name="Ninomiya N."/>
            <person name="Nishio T."/>
            <person name="Okada M."/>
            <person name="Plessy C."/>
            <person name="Shibata K."/>
            <person name="Shiraki T."/>
            <person name="Suzuki S."/>
            <person name="Tagami M."/>
            <person name="Waki K."/>
            <person name="Watahiki A."/>
            <person name="Okamura-Oho Y."/>
            <person name="Suzuki H."/>
            <person name="Kawai J."/>
            <person name="Hayashizaki Y."/>
        </authorList>
    </citation>
    <scope>NUCLEOTIDE SEQUENCE [LARGE SCALE MRNA]</scope>
    <source>
        <strain>C57BL/6J</strain>
        <strain>NOD</strain>
        <tissue>Embryo</tissue>
        <tissue>Embryonic spinal ganglion</tissue>
        <tissue>Spinal cord</tissue>
        <tissue>Spleen</tissue>
    </source>
</reference>
<reference key="2">
    <citation type="journal article" date="2004" name="Genome Res.">
        <title>The status, quality, and expansion of the NIH full-length cDNA project: the Mammalian Gene Collection (MGC).</title>
        <authorList>
            <consortium name="The MGC Project Team"/>
        </authorList>
    </citation>
    <scope>NUCLEOTIDE SEQUENCE [LARGE SCALE MRNA]</scope>
    <source>
        <strain>C57BL/6J</strain>
        <tissue>Retina</tissue>
    </source>
</reference>
<reference key="3">
    <citation type="journal article" date="2010" name="Cell">
        <title>A tissue-specific atlas of mouse protein phosphorylation and expression.</title>
        <authorList>
            <person name="Huttlin E.L."/>
            <person name="Jedrychowski M.P."/>
            <person name="Elias J.E."/>
            <person name="Goswami T."/>
            <person name="Rad R."/>
            <person name="Beausoleil S.A."/>
            <person name="Villen J."/>
            <person name="Haas W."/>
            <person name="Sowa M.E."/>
            <person name="Gygi S.P."/>
        </authorList>
    </citation>
    <scope>IDENTIFICATION BY MASS SPECTROMETRY [LARGE SCALE ANALYSIS]</scope>
    <source>
        <tissue>Brain</tissue>
        <tissue>Heart</tissue>
        <tissue>Kidney</tissue>
        <tissue>Lung</tissue>
    </source>
</reference>
<reference key="4">
    <citation type="journal article" date="2013" name="Nature">
        <title>Inhibitory signalling to the Arp2/3 complex steers cell migration.</title>
        <authorList>
            <person name="Dang I."/>
            <person name="Gorelik R."/>
            <person name="Sousa-Blin C."/>
            <person name="Derivery E."/>
            <person name="Guerin C."/>
            <person name="Linkner J."/>
            <person name="Nemethova M."/>
            <person name="Dumortier J.G."/>
            <person name="Giger F.A."/>
            <person name="Chipysheva T.A."/>
            <person name="Ermilova V.D."/>
            <person name="Vacher S."/>
            <person name="Campanacci V."/>
            <person name="Herrada I."/>
            <person name="Planson A.G."/>
            <person name="Fetics S."/>
            <person name="Henriot V."/>
            <person name="David V."/>
            <person name="Oguievetskaia K."/>
            <person name="Lakisic G."/>
            <person name="Pierre F."/>
            <person name="Steffen A."/>
            <person name="Boyreau A."/>
            <person name="Peyrieras N."/>
            <person name="Rottner K."/>
            <person name="Zinn-Justin S."/>
            <person name="Cherfils J."/>
            <person name="Bieche I."/>
            <person name="Alexandrova A.Y."/>
            <person name="David N.B."/>
            <person name="Small J.V."/>
            <person name="Faix J."/>
            <person name="Blanchoin L."/>
            <person name="Gautreau A."/>
        </authorList>
    </citation>
    <scope>SUBCELLULAR LOCATION</scope>
    <scope>INTERACTION WITH ARPC5</scope>
</reference>
<dbReference type="EMBL" id="AK011654">
    <property type="protein sequence ID" value="BAB27760.1"/>
    <property type="molecule type" value="mRNA"/>
</dbReference>
<dbReference type="EMBL" id="AK039350">
    <property type="protein sequence ID" value="BAC30326.1"/>
    <property type="molecule type" value="mRNA"/>
</dbReference>
<dbReference type="EMBL" id="AK051261">
    <property type="protein sequence ID" value="BAC34579.1"/>
    <property type="molecule type" value="mRNA"/>
</dbReference>
<dbReference type="EMBL" id="AK156013">
    <property type="protein sequence ID" value="BAE33545.1"/>
    <property type="molecule type" value="mRNA"/>
</dbReference>
<dbReference type="EMBL" id="BC031379">
    <property type="protein sequence ID" value="AAH31379.1"/>
    <property type="molecule type" value="mRNA"/>
</dbReference>
<dbReference type="CCDS" id="CCDS21390.1"/>
<dbReference type="RefSeq" id="NP_081696.1">
    <property type="nucleotide sequence ID" value="NM_027420.4"/>
</dbReference>
<dbReference type="SMR" id="Q9D0A3"/>
<dbReference type="BioGRID" id="214038">
    <property type="interactions" value="2"/>
</dbReference>
<dbReference type="DIP" id="DIP-60588N"/>
<dbReference type="FunCoup" id="Q9D0A3">
    <property type="interactions" value="35"/>
</dbReference>
<dbReference type="IntAct" id="Q9D0A3">
    <property type="interactions" value="1"/>
</dbReference>
<dbReference type="STRING" id="10090.ENSMUSP00000049440"/>
<dbReference type="GlyGen" id="Q9D0A3">
    <property type="glycosylation" value="1 site, 1 O-linked glycan (1 site)"/>
</dbReference>
<dbReference type="iPTMnet" id="Q9D0A3"/>
<dbReference type="PhosphoSitePlus" id="Q9D0A3"/>
<dbReference type="jPOST" id="Q9D0A3"/>
<dbReference type="PaxDb" id="10090-ENSMUSP00000049440"/>
<dbReference type="PeptideAtlas" id="Q9D0A3"/>
<dbReference type="ProteomicsDB" id="283246"/>
<dbReference type="Pumba" id="Q9D0A3"/>
<dbReference type="DNASU" id="70420"/>
<dbReference type="Ensembl" id="ENSMUST00000048731.6">
    <property type="protein sequence ID" value="ENSMUSP00000049440.6"/>
    <property type="gene ID" value="ENSMUSG00000039043.6"/>
</dbReference>
<dbReference type="GeneID" id="70420"/>
<dbReference type="KEGG" id="mmu:70420"/>
<dbReference type="UCSC" id="uc009hzh.1">
    <property type="organism name" value="mouse"/>
</dbReference>
<dbReference type="AGR" id="MGI:1917670"/>
<dbReference type="CTD" id="348110"/>
<dbReference type="MGI" id="MGI:1917670">
    <property type="gene designation" value="Arpin"/>
</dbReference>
<dbReference type="VEuPathDB" id="HostDB:ENSMUSG00000039043"/>
<dbReference type="eggNOG" id="ENOG502R4IG">
    <property type="taxonomic scope" value="Eukaryota"/>
</dbReference>
<dbReference type="GeneTree" id="ENSGT00530000064251"/>
<dbReference type="HOGENOM" id="CLU_106544_0_0_1"/>
<dbReference type="InParanoid" id="Q9D0A3"/>
<dbReference type="OMA" id="QTVAFWI"/>
<dbReference type="OrthoDB" id="5953051at2759"/>
<dbReference type="PhylomeDB" id="Q9D0A3"/>
<dbReference type="BioGRID-ORCS" id="70420">
    <property type="hits" value="2 hits in 44 CRISPR screens"/>
</dbReference>
<dbReference type="PRO" id="PR:Q9D0A3"/>
<dbReference type="Proteomes" id="UP000000589">
    <property type="component" value="Chromosome 7"/>
</dbReference>
<dbReference type="RNAct" id="Q9D0A3">
    <property type="molecule type" value="protein"/>
</dbReference>
<dbReference type="Bgee" id="ENSMUSG00000039043">
    <property type="expression patterns" value="Expressed in external carotid artery and 218 other cell types or tissues"/>
</dbReference>
<dbReference type="GO" id="GO:0030027">
    <property type="term" value="C:lamellipodium"/>
    <property type="evidence" value="ECO:0000314"/>
    <property type="project" value="UniProtKB"/>
</dbReference>
<dbReference type="GO" id="GO:0033058">
    <property type="term" value="P:directional locomotion"/>
    <property type="evidence" value="ECO:0000250"/>
    <property type="project" value="UniProtKB"/>
</dbReference>
<dbReference type="GO" id="GO:0051126">
    <property type="term" value="P:negative regulation of actin nucleation"/>
    <property type="evidence" value="ECO:0000250"/>
    <property type="project" value="UniProtKB"/>
</dbReference>
<dbReference type="GO" id="GO:0030336">
    <property type="term" value="P:negative regulation of cell migration"/>
    <property type="evidence" value="ECO:0000250"/>
    <property type="project" value="UniProtKB"/>
</dbReference>
<dbReference type="GO" id="GO:2000393">
    <property type="term" value="P:negative regulation of lamellipodium morphogenesis"/>
    <property type="evidence" value="ECO:0000250"/>
    <property type="project" value="UniProtKB"/>
</dbReference>
<dbReference type="InterPro" id="IPR018889">
    <property type="entry name" value="Arpin"/>
</dbReference>
<dbReference type="PANTHER" id="PTHR31199">
    <property type="entry name" value="ARPIN"/>
    <property type="match status" value="1"/>
</dbReference>
<dbReference type="PANTHER" id="PTHR31199:SF1">
    <property type="entry name" value="ARPIN"/>
    <property type="match status" value="1"/>
</dbReference>
<dbReference type="Pfam" id="PF10574">
    <property type="entry name" value="UPF0552"/>
    <property type="match status" value="1"/>
</dbReference>
<comment type="function">
    <text evidence="1">Regulates actin polymerization by inhibiting the actin-nucleating activity of the Arp2/3 complex; the function is competitive with nucleation promoting factors. Participates in an incoherent feedforward loop at the lamellipodium tip where it inhibits the ARP2/2 complex in response to Rac signaling and where Rac also stimulates actin polymerization through the WAVE complex. Involved in steering cell migration by controlling its directional persistence (By similarity).</text>
</comment>
<comment type="subunit">
    <text evidence="3">Associates with the Arp2/3 complex. Interacts with ARPC2; enhanced by activated RAC1. Interacts with ARPC5; the interaction is dependent on RAC1.</text>
</comment>
<comment type="subcellular location">
    <subcellularLocation>
        <location evidence="3">Cell projection</location>
        <location evidence="3">Lamellipodium</location>
    </subcellularLocation>
    <text>Colocalized with the WAVE complex at lamellipodium tip.</text>
</comment>
<comment type="domain">
    <text evidence="1">The acidic C-terminus is necessary and sufficient to inhibit ARP2/3 complex activity.</text>
</comment>
<comment type="similarity">
    <text evidence="4">Belongs to the Arpin family.</text>
</comment>
<evidence type="ECO:0000250" key="1"/>
<evidence type="ECO:0000256" key="2">
    <source>
        <dbReference type="SAM" id="MobiDB-lite"/>
    </source>
</evidence>
<evidence type="ECO:0000269" key="3">
    <source>
    </source>
</evidence>
<evidence type="ECO:0000305" key="4"/>
<organism>
    <name type="scientific">Mus musculus</name>
    <name type="common">Mouse</name>
    <dbReference type="NCBI Taxonomy" id="10090"/>
    <lineage>
        <taxon>Eukaryota</taxon>
        <taxon>Metazoa</taxon>
        <taxon>Chordata</taxon>
        <taxon>Craniata</taxon>
        <taxon>Vertebrata</taxon>
        <taxon>Euteleostomi</taxon>
        <taxon>Mammalia</taxon>
        <taxon>Eutheria</taxon>
        <taxon>Euarchontoglires</taxon>
        <taxon>Glires</taxon>
        <taxon>Rodentia</taxon>
        <taxon>Myomorpha</taxon>
        <taxon>Muroidea</taxon>
        <taxon>Muridae</taxon>
        <taxon>Murinae</taxon>
        <taxon>Mus</taxon>
        <taxon>Mus</taxon>
    </lineage>
</organism>
<sequence length="226" mass="25193">MSRIYQDSALRNKAVQSARLPGTWDPATHQGGNGILLEGELVDVSRHSILDAHGRKERYYVLYIQPSCIHRRKFDPKGNEIEPNFSATRKVNTGFLMSSYKVEAKGDTDRLTLEALKSLVNKPQLLELTESLTPDQAVAFWMPESEMEVMELELGTGVRLKTRGDGPFIDSLAKLELGTVTKCNFAGDGKTGASWTDNIMAQKSSERNTAEIREQGDGAEDEEWDD</sequence>